<organismHost>
    <name type="scientific">Vertebrata</name>
    <dbReference type="NCBI Taxonomy" id="7742"/>
</organismHost>
<protein>
    <recommendedName>
        <fullName>Transcript termination protein A18</fullName>
        <ecNumber>3.6.4.-</ecNumber>
    </recommendedName>
</protein>
<comment type="function">
    <text evidence="1">DNA helicase which seems to act as a postreplicative transcription termination factor. Involved in ATP-dependent release of nascent RNA. Forms a stable complex with single-stranded DNA, and to a lesser extent RNA (By similarity).</text>
</comment>
<comment type="subunit">
    <text evidence="1">Interacts with G2. Might be part of a transcription complex composed at least of G2, A18, and H5.</text>
</comment>
<comment type="subcellular location">
    <subcellularLocation>
        <location evidence="1">Virion</location>
    </subcellularLocation>
    <text evidence="1">Localizes to the virion core.</text>
</comment>
<comment type="similarity">
    <text evidence="4">Belongs to the helicase family. Poxviruses subfamily.</text>
</comment>
<dbReference type="EC" id="3.6.4.-"/>
<dbReference type="EMBL" id="AF198100">
    <property type="protein sequence ID" value="AAF44527.1"/>
    <property type="molecule type" value="Genomic_DNA"/>
</dbReference>
<dbReference type="RefSeq" id="NP_039146.1">
    <property type="nucleotide sequence ID" value="NC_002188.1"/>
</dbReference>
<dbReference type="GeneID" id="1486755"/>
<dbReference type="KEGG" id="vg:1486755"/>
<dbReference type="Proteomes" id="UP000008597">
    <property type="component" value="Segment"/>
</dbReference>
<dbReference type="GO" id="GO:0044423">
    <property type="term" value="C:virion component"/>
    <property type="evidence" value="ECO:0007669"/>
    <property type="project" value="UniProtKB-KW"/>
</dbReference>
<dbReference type="GO" id="GO:0005524">
    <property type="term" value="F:ATP binding"/>
    <property type="evidence" value="ECO:0007669"/>
    <property type="project" value="UniProtKB-KW"/>
</dbReference>
<dbReference type="GO" id="GO:0003677">
    <property type="term" value="F:DNA binding"/>
    <property type="evidence" value="ECO:0007669"/>
    <property type="project" value="UniProtKB-KW"/>
</dbReference>
<dbReference type="GO" id="GO:0004386">
    <property type="term" value="F:helicase activity"/>
    <property type="evidence" value="ECO:0007669"/>
    <property type="project" value="UniProtKB-KW"/>
</dbReference>
<dbReference type="GO" id="GO:0016787">
    <property type="term" value="F:hydrolase activity"/>
    <property type="evidence" value="ECO:0007669"/>
    <property type="project" value="UniProtKB-KW"/>
</dbReference>
<dbReference type="Gene3D" id="3.40.50.300">
    <property type="entry name" value="P-loop containing nucleotide triphosphate hydrolases"/>
    <property type="match status" value="2"/>
</dbReference>
<dbReference type="InterPro" id="IPR006935">
    <property type="entry name" value="Helicase/UvrB_N"/>
</dbReference>
<dbReference type="InterPro" id="IPR014001">
    <property type="entry name" value="Helicase_ATP-bd"/>
</dbReference>
<dbReference type="InterPro" id="IPR001650">
    <property type="entry name" value="Helicase_C-like"/>
</dbReference>
<dbReference type="InterPro" id="IPR027417">
    <property type="entry name" value="P-loop_NTPase"/>
</dbReference>
<dbReference type="Pfam" id="PF00271">
    <property type="entry name" value="Helicase_C"/>
    <property type="match status" value="1"/>
</dbReference>
<dbReference type="Pfam" id="PF04851">
    <property type="entry name" value="ResIII"/>
    <property type="match status" value="1"/>
</dbReference>
<dbReference type="SMART" id="SM00487">
    <property type="entry name" value="DEXDc"/>
    <property type="match status" value="1"/>
</dbReference>
<dbReference type="SUPFAM" id="SSF52540">
    <property type="entry name" value="P-loop containing nucleoside triphosphate hydrolases"/>
    <property type="match status" value="1"/>
</dbReference>
<dbReference type="PROSITE" id="PS51192">
    <property type="entry name" value="HELICASE_ATP_BIND_1"/>
    <property type="match status" value="1"/>
</dbReference>
<dbReference type="PROSITE" id="PS51194">
    <property type="entry name" value="HELICASE_CTER"/>
    <property type="match status" value="1"/>
</dbReference>
<reference key="1">
    <citation type="journal article" date="2000" name="J. Virol.">
        <title>The genome of fowlpox virus.</title>
        <authorList>
            <person name="Afonso C.L."/>
            <person name="Tulman E.R."/>
            <person name="Lu Z."/>
            <person name="Zsak L."/>
            <person name="Kutish G.F."/>
            <person name="Rock D.L."/>
        </authorList>
    </citation>
    <scope>NUCLEOTIDE SEQUENCE [LARGE SCALE GENOMIC DNA]</scope>
</reference>
<keyword id="KW-0067">ATP-binding</keyword>
<keyword id="KW-0238">DNA-binding</keyword>
<keyword id="KW-0347">Helicase</keyword>
<keyword id="KW-0378">Hydrolase</keyword>
<keyword id="KW-0426">Late protein</keyword>
<keyword id="KW-0547">Nucleotide-binding</keyword>
<keyword id="KW-1185">Reference proteome</keyword>
<keyword id="KW-0804">Transcription</keyword>
<keyword id="KW-0946">Virion</keyword>
<gene>
    <name type="ordered locus">FPV183</name>
</gene>
<feature type="chain" id="PRO_0000102180" description="Transcript termination protein A18">
    <location>
        <begin position="1"/>
        <end position="462"/>
    </location>
</feature>
<feature type="domain" description="Helicase ATP-binding" evidence="2">
    <location>
        <begin position="99"/>
        <end position="255"/>
    </location>
</feature>
<feature type="domain" description="Helicase C-terminal" evidence="3">
    <location>
        <begin position="308"/>
        <end position="459"/>
    </location>
</feature>
<feature type="short sequence motif" description="DEAH box">
    <location>
        <begin position="205"/>
        <end position="208"/>
    </location>
</feature>
<feature type="binding site" evidence="2">
    <location>
        <begin position="112"/>
        <end position="119"/>
    </location>
    <ligand>
        <name>ATP</name>
        <dbReference type="ChEBI" id="CHEBI:30616"/>
    </ligand>
</feature>
<sequence>MSYITVIDDKLYSSLRKLVGYSPLYLFNDKGDFVEVMKNSEFRFLIPSGYFSNSNVPLYGLTFSYGRNWMKDRQKIILPELYPIQRRVIEEIILQFSRKCKEKRPLYTTLHLACGFGKTVTASYLIGTHKKNAVVSVPNKLILKQWENSISSLKVSYYVSYEGVSKLLKVLTSKSFSILVVVDKHFSNKEFCELVYENYDVFILDEAHIYNLMNESIMTSFLCYYPPRICYFLTATPRQQNAVYCNSIINFIKFSPLQKILYVIRELYNEYTNPSIRAHVSQLQTTANKYHLYTEKALAEDIHRNKTIVDKIIETFKTNQGNRILVITKLRNHMIIIYNDLRKVLSDKVYLGDAQKKSTTDMIKELRTIDNFILVSTLHYAGTGLDIPNLDSLFICNTVMNSMQSEQVMGRICRDTGSSPTRSIYLFINTSIKEIKSLVGVFTQRFAQQATKLGFREVSQMA</sequence>
<accession>Q9J550</accession>
<proteinExistence type="inferred from homology"/>
<organism>
    <name type="scientific">Fowlpox virus (strain NVSL)</name>
    <name type="common">FPV</name>
    <dbReference type="NCBI Taxonomy" id="928301"/>
    <lineage>
        <taxon>Viruses</taxon>
        <taxon>Varidnaviria</taxon>
        <taxon>Bamfordvirae</taxon>
        <taxon>Nucleocytoviricota</taxon>
        <taxon>Pokkesviricetes</taxon>
        <taxon>Chitovirales</taxon>
        <taxon>Poxviridae</taxon>
        <taxon>Chordopoxvirinae</taxon>
        <taxon>Avipoxvirus</taxon>
        <taxon>Fowlpox virus</taxon>
    </lineage>
</organism>
<name>A18_FOWPN</name>
<evidence type="ECO:0000250" key="1"/>
<evidence type="ECO:0000255" key="2">
    <source>
        <dbReference type="PROSITE-ProRule" id="PRU00541"/>
    </source>
</evidence>
<evidence type="ECO:0000255" key="3">
    <source>
        <dbReference type="PROSITE-ProRule" id="PRU00542"/>
    </source>
</evidence>
<evidence type="ECO:0000305" key="4"/>